<evidence type="ECO:0000255" key="1">
    <source>
        <dbReference type="HAMAP-Rule" id="MF_01635"/>
    </source>
</evidence>
<feature type="chain" id="PRO_1000069838" description="4-hydroxybenzoate octaprenyltransferase">
    <location>
        <begin position="1"/>
        <end position="288"/>
    </location>
</feature>
<feature type="transmembrane region" description="Helical" evidence="1">
    <location>
        <begin position="23"/>
        <end position="43"/>
    </location>
</feature>
<feature type="transmembrane region" description="Helical" evidence="1">
    <location>
        <begin position="46"/>
        <end position="66"/>
    </location>
</feature>
<feature type="transmembrane region" description="Helical" evidence="1">
    <location>
        <begin position="98"/>
        <end position="118"/>
    </location>
</feature>
<feature type="transmembrane region" description="Helical" evidence="1">
    <location>
        <begin position="141"/>
        <end position="161"/>
    </location>
</feature>
<feature type="transmembrane region" description="Helical" evidence="1">
    <location>
        <begin position="163"/>
        <end position="183"/>
    </location>
</feature>
<feature type="transmembrane region" description="Helical" evidence="1">
    <location>
        <begin position="213"/>
        <end position="233"/>
    </location>
</feature>
<feature type="transmembrane region" description="Helical" evidence="1">
    <location>
        <begin position="234"/>
        <end position="254"/>
    </location>
</feature>
<feature type="transmembrane region" description="Helical" evidence="1">
    <location>
        <begin position="268"/>
        <end position="288"/>
    </location>
</feature>
<name>UBIA_YERP3</name>
<organism>
    <name type="scientific">Yersinia pseudotuberculosis serotype O:1b (strain IP 31758)</name>
    <dbReference type="NCBI Taxonomy" id="349747"/>
    <lineage>
        <taxon>Bacteria</taxon>
        <taxon>Pseudomonadati</taxon>
        <taxon>Pseudomonadota</taxon>
        <taxon>Gammaproteobacteria</taxon>
        <taxon>Enterobacterales</taxon>
        <taxon>Yersiniaceae</taxon>
        <taxon>Yersinia</taxon>
    </lineage>
</organism>
<sequence>MKGSTVHTKWQAYCRLMRIDKPIGSLLLLWPTLWALWLAGRGIPEAKILVVFVLGVFFMRAAGCVVNDYADRHIDGFVKRTASRPLPSGTISEKESKILFVVLILLSFGLVLTLNSMTIWLSLAALALAWIYPFMKRVTHLPQVVLGAAFGWSIPMGFAAVSESLPLVCWLLLLANICWTVAYDTQYAMVDRDDDLRIGVKSTAILFGQHDKLIIGLLQLATLLLMVAIGWLMNLGGAFYWSILLAGALFTHQQKMIAQREREPCFRAFLNNNYVGLILFLGILISYW</sequence>
<accession>A7FN99</accession>
<proteinExistence type="inferred from homology"/>
<keyword id="KW-0997">Cell inner membrane</keyword>
<keyword id="KW-1003">Cell membrane</keyword>
<keyword id="KW-0460">Magnesium</keyword>
<keyword id="KW-0472">Membrane</keyword>
<keyword id="KW-0808">Transferase</keyword>
<keyword id="KW-0812">Transmembrane</keyword>
<keyword id="KW-1133">Transmembrane helix</keyword>
<keyword id="KW-0831">Ubiquinone biosynthesis</keyword>
<dbReference type="EC" id="2.5.1.39" evidence="1"/>
<dbReference type="EMBL" id="CP000720">
    <property type="protein sequence ID" value="ABS46873.1"/>
    <property type="molecule type" value="Genomic_DNA"/>
</dbReference>
<dbReference type="RefSeq" id="WP_012105834.1">
    <property type="nucleotide sequence ID" value="NC_009708.1"/>
</dbReference>
<dbReference type="SMR" id="A7FN99"/>
<dbReference type="GeneID" id="49787639"/>
<dbReference type="KEGG" id="ypi:YpsIP31758_3773"/>
<dbReference type="HOGENOM" id="CLU_034879_1_0_6"/>
<dbReference type="UniPathway" id="UPA00232"/>
<dbReference type="Proteomes" id="UP000002412">
    <property type="component" value="Chromosome"/>
</dbReference>
<dbReference type="GO" id="GO:0005886">
    <property type="term" value="C:plasma membrane"/>
    <property type="evidence" value="ECO:0007669"/>
    <property type="project" value="UniProtKB-SubCell"/>
</dbReference>
<dbReference type="GO" id="GO:0008412">
    <property type="term" value="F:4-hydroxybenzoate polyprenyltransferase activity"/>
    <property type="evidence" value="ECO:0007669"/>
    <property type="project" value="UniProtKB-UniRule"/>
</dbReference>
<dbReference type="GO" id="GO:0006744">
    <property type="term" value="P:ubiquinone biosynthetic process"/>
    <property type="evidence" value="ECO:0007669"/>
    <property type="project" value="UniProtKB-UniRule"/>
</dbReference>
<dbReference type="CDD" id="cd13959">
    <property type="entry name" value="PT_UbiA_COQ2"/>
    <property type="match status" value="1"/>
</dbReference>
<dbReference type="FunFam" id="1.10.357.140:FF:000002">
    <property type="entry name" value="4-hydroxybenzoate octaprenyltransferase"/>
    <property type="match status" value="1"/>
</dbReference>
<dbReference type="FunFam" id="1.20.120.1780:FF:000001">
    <property type="entry name" value="4-hydroxybenzoate octaprenyltransferase"/>
    <property type="match status" value="1"/>
</dbReference>
<dbReference type="Gene3D" id="1.10.357.140">
    <property type="entry name" value="UbiA prenyltransferase"/>
    <property type="match status" value="1"/>
</dbReference>
<dbReference type="Gene3D" id="1.20.120.1780">
    <property type="entry name" value="UbiA prenyltransferase"/>
    <property type="match status" value="1"/>
</dbReference>
<dbReference type="HAMAP" id="MF_01635">
    <property type="entry name" value="UbiA"/>
    <property type="match status" value="1"/>
</dbReference>
<dbReference type="InterPro" id="IPR006370">
    <property type="entry name" value="HB_polyprenyltransferase-like"/>
</dbReference>
<dbReference type="InterPro" id="IPR039653">
    <property type="entry name" value="Prenyltransferase"/>
</dbReference>
<dbReference type="InterPro" id="IPR000537">
    <property type="entry name" value="UbiA_prenyltransferase"/>
</dbReference>
<dbReference type="InterPro" id="IPR030470">
    <property type="entry name" value="UbiA_prenylTrfase_CS"/>
</dbReference>
<dbReference type="InterPro" id="IPR044878">
    <property type="entry name" value="UbiA_sf"/>
</dbReference>
<dbReference type="NCBIfam" id="TIGR01474">
    <property type="entry name" value="ubiA_proteo"/>
    <property type="match status" value="1"/>
</dbReference>
<dbReference type="PANTHER" id="PTHR11048:SF28">
    <property type="entry name" value="4-HYDROXYBENZOATE POLYPRENYLTRANSFERASE, MITOCHONDRIAL"/>
    <property type="match status" value="1"/>
</dbReference>
<dbReference type="PANTHER" id="PTHR11048">
    <property type="entry name" value="PRENYLTRANSFERASES"/>
    <property type="match status" value="1"/>
</dbReference>
<dbReference type="Pfam" id="PF01040">
    <property type="entry name" value="UbiA"/>
    <property type="match status" value="1"/>
</dbReference>
<dbReference type="PROSITE" id="PS00943">
    <property type="entry name" value="UBIA"/>
    <property type="match status" value="1"/>
</dbReference>
<gene>
    <name evidence="1" type="primary">ubiA</name>
    <name type="ordered locus">YpsIP31758_3773</name>
</gene>
<reference key="1">
    <citation type="journal article" date="2007" name="PLoS Genet.">
        <title>The complete genome sequence of Yersinia pseudotuberculosis IP31758, the causative agent of Far East scarlet-like fever.</title>
        <authorList>
            <person name="Eppinger M."/>
            <person name="Rosovitz M.J."/>
            <person name="Fricke W.F."/>
            <person name="Rasko D.A."/>
            <person name="Kokorina G."/>
            <person name="Fayolle C."/>
            <person name="Lindler L.E."/>
            <person name="Carniel E."/>
            <person name="Ravel J."/>
        </authorList>
    </citation>
    <scope>NUCLEOTIDE SEQUENCE [LARGE SCALE GENOMIC DNA]</scope>
    <source>
        <strain>IP 31758</strain>
    </source>
</reference>
<protein>
    <recommendedName>
        <fullName evidence="1">4-hydroxybenzoate octaprenyltransferase</fullName>
        <ecNumber evidence="1">2.5.1.39</ecNumber>
    </recommendedName>
    <alternativeName>
        <fullName evidence="1">4-HB polyprenyltransferase</fullName>
    </alternativeName>
</protein>
<comment type="function">
    <text evidence="1">Catalyzes the prenylation of para-hydroxybenzoate (PHB) with an all-trans polyprenyl group. Mediates the second step in the final reaction sequence of ubiquinone-8 (UQ-8) biosynthesis, which is the condensation of the polyisoprenoid side chain with PHB, generating the first membrane-bound Q intermediate 3-octaprenyl-4-hydroxybenzoate.</text>
</comment>
<comment type="catalytic activity">
    <reaction evidence="1">
        <text>all-trans-octaprenyl diphosphate + 4-hydroxybenzoate = 4-hydroxy-3-(all-trans-octaprenyl)benzoate + diphosphate</text>
        <dbReference type="Rhea" id="RHEA:27782"/>
        <dbReference type="ChEBI" id="CHEBI:1617"/>
        <dbReference type="ChEBI" id="CHEBI:17879"/>
        <dbReference type="ChEBI" id="CHEBI:33019"/>
        <dbReference type="ChEBI" id="CHEBI:57711"/>
        <dbReference type="EC" id="2.5.1.39"/>
    </reaction>
</comment>
<comment type="cofactor">
    <cofactor evidence="1">
        <name>Mg(2+)</name>
        <dbReference type="ChEBI" id="CHEBI:18420"/>
    </cofactor>
</comment>
<comment type="pathway">
    <text evidence="1">Cofactor biosynthesis; ubiquinone biosynthesis.</text>
</comment>
<comment type="subcellular location">
    <subcellularLocation>
        <location evidence="1">Cell inner membrane</location>
        <topology evidence="1">Multi-pass membrane protein</topology>
    </subcellularLocation>
</comment>
<comment type="similarity">
    <text evidence="1">Belongs to the UbiA prenyltransferase family.</text>
</comment>